<proteinExistence type="evidence at transcript level"/>
<dbReference type="EMBL" id="EU926124">
    <property type="protein sequence ID" value="ACI41456.1"/>
    <property type="molecule type" value="mRNA"/>
</dbReference>
<dbReference type="EMBL" id="FM864128">
    <property type="protein sequence ID" value="CAS03725.1"/>
    <property type="molecule type" value="mRNA"/>
</dbReference>
<dbReference type="SMR" id="B6DD40"/>
<dbReference type="ArachnoServer" id="AS001071">
    <property type="toxin name" value="U15-lycotoxin-Ls1f"/>
</dbReference>
<dbReference type="GO" id="GO:0005576">
    <property type="term" value="C:extracellular region"/>
    <property type="evidence" value="ECO:0007669"/>
    <property type="project" value="UniProtKB-SubCell"/>
</dbReference>
<dbReference type="GO" id="GO:0090729">
    <property type="term" value="F:toxin activity"/>
    <property type="evidence" value="ECO:0007669"/>
    <property type="project" value="UniProtKB-KW"/>
</dbReference>
<dbReference type="GO" id="GO:0042742">
    <property type="term" value="P:defense response to bacterium"/>
    <property type="evidence" value="ECO:0007669"/>
    <property type="project" value="UniProtKB-KW"/>
</dbReference>
<dbReference type="InterPro" id="IPR036645">
    <property type="entry name" value="Elafin-like_sf"/>
</dbReference>
<dbReference type="SUPFAM" id="SSF57256">
    <property type="entry name" value="Elafin-like"/>
    <property type="match status" value="1"/>
</dbReference>
<keyword id="KW-0044">Antibiotic</keyword>
<keyword id="KW-0929">Antimicrobial</keyword>
<keyword id="KW-1015">Disulfide bond</keyword>
<keyword id="KW-0964">Secreted</keyword>
<keyword id="KW-0732">Signal</keyword>
<keyword id="KW-0800">Toxin</keyword>
<protein>
    <recommendedName>
        <fullName>U15-lycotoxin-Ls1f</fullName>
    </recommendedName>
    <alternativeName>
        <fullName>Toxin-like structure LSTX-N7</fullName>
    </alternativeName>
</protein>
<feature type="signal peptide" evidence="2">
    <location>
        <begin position="1"/>
        <end position="20"/>
    </location>
</feature>
<feature type="chain" id="PRO_0000401883" description="U15-lycotoxin-Ls1f">
    <location>
        <begin position="21"/>
        <end position="87"/>
    </location>
</feature>
<feature type="domain" description="WAP">
    <location>
        <begin position="21"/>
        <end position="66"/>
    </location>
</feature>
<feature type="disulfide bond" evidence="1">
    <location>
        <begin position="24"/>
        <end position="54"/>
    </location>
</feature>
<feature type="disulfide bond" evidence="1">
    <location>
        <begin position="32"/>
        <end position="58"/>
    </location>
</feature>
<feature type="disulfide bond" evidence="1">
    <location>
        <begin position="41"/>
        <end position="53"/>
    </location>
</feature>
<feature type="disulfide bond" evidence="3">
    <location>
        <begin position="42"/>
        <end position="80"/>
    </location>
</feature>
<feature type="disulfide bond" evidence="1">
    <location>
        <begin position="47"/>
        <end position="62"/>
    </location>
</feature>
<comment type="function">
    <text evidence="1">Has antibacterial activity.</text>
</comment>
<comment type="subcellular location">
    <subcellularLocation>
        <location evidence="1">Secreted</location>
    </subcellularLocation>
</comment>
<comment type="tissue specificity">
    <text>Expressed by the venom gland.</text>
</comment>
<comment type="PTM">
    <text evidence="3">Contains 5 disulfide bonds.</text>
</comment>
<comment type="similarity">
    <text evidence="3">Belongs to the venom protein 11 family. 01 (wap-1) subfamily.</text>
</comment>
<organism>
    <name type="scientific">Lycosa singoriensis</name>
    <name type="common">Wolf spider</name>
    <name type="synonym">Aranea singoriensis</name>
    <dbReference type="NCBI Taxonomy" id="434756"/>
    <lineage>
        <taxon>Eukaryota</taxon>
        <taxon>Metazoa</taxon>
        <taxon>Ecdysozoa</taxon>
        <taxon>Arthropoda</taxon>
        <taxon>Chelicerata</taxon>
        <taxon>Arachnida</taxon>
        <taxon>Araneae</taxon>
        <taxon>Araneomorphae</taxon>
        <taxon>Entelegynae</taxon>
        <taxon>Lycosoidea</taxon>
        <taxon>Lycosidae</taxon>
        <taxon>Lycosa</taxon>
    </lineage>
</organism>
<accession>B6DD40</accession>
<evidence type="ECO:0000250" key="1"/>
<evidence type="ECO:0000255" key="2"/>
<evidence type="ECO:0000305" key="3"/>
<reference key="1">
    <citation type="journal article" date="2010" name="Zoology">
        <title>Transcriptome analysis of the venom glands of the Chinese wolf spider Lycosa singoriensis.</title>
        <authorList>
            <person name="Zhang Y."/>
            <person name="Chen J."/>
            <person name="Tang X."/>
            <person name="Wang F."/>
            <person name="Jiang L."/>
            <person name="Xiong X."/>
            <person name="Wang M."/>
            <person name="Rong M."/>
            <person name="Liu Z."/>
            <person name="Liang S."/>
        </authorList>
    </citation>
    <scope>NUCLEOTIDE SEQUENCE [LARGE SCALE MRNA]</scope>
    <source>
        <tissue>Venom gland</tissue>
    </source>
</reference>
<sequence length="87" mass="9458">MNSKIFAVLLLLAFLSCVLSDQYCPKSSITACKKMNIRNDCCKDDDCTGGSWCCATPCGNFCKYPTDRPGGKRAAGGKSCKTGYVYY</sequence>
<name>TXF07_LYCSI</name>